<sequence>MVQVWYMDTEETDQRLEHHRNPPAYLELDDLYQKTGVEYFKINADEYQSDNTLTELRAKRGYTYDDEITCSEKCLPDYANKLKAFFTEHLHTDEEIRLILEGSGYFDVRDNEDNWLRIKVVKGDLIIIPAGIYHRFTLDTNNFIRTRRYFVGEPVWAPHNRPADEMDCRKSYIKHQSENFVQFNKV</sequence>
<keyword id="KW-0028">Amino-acid biosynthesis</keyword>
<keyword id="KW-0963">Cytoplasm</keyword>
<keyword id="KW-0223">Dioxygenase</keyword>
<keyword id="KW-0408">Iron</keyword>
<keyword id="KW-0479">Metal-binding</keyword>
<keyword id="KW-0486">Methionine biosynthesis</keyword>
<keyword id="KW-0533">Nickel</keyword>
<keyword id="KW-0539">Nucleus</keyword>
<keyword id="KW-0560">Oxidoreductase</keyword>
<keyword id="KW-1185">Reference proteome</keyword>
<gene>
    <name evidence="3 5" type="primary">Adi1</name>
    <name evidence="5" type="ORF">CG32068</name>
</gene>
<organism>
    <name type="scientific">Drosophila melanogaster</name>
    <name type="common">Fruit fly</name>
    <dbReference type="NCBI Taxonomy" id="7227"/>
    <lineage>
        <taxon>Eukaryota</taxon>
        <taxon>Metazoa</taxon>
        <taxon>Ecdysozoa</taxon>
        <taxon>Arthropoda</taxon>
        <taxon>Hexapoda</taxon>
        <taxon>Insecta</taxon>
        <taxon>Pterygota</taxon>
        <taxon>Neoptera</taxon>
        <taxon>Endopterygota</taxon>
        <taxon>Diptera</taxon>
        <taxon>Brachycera</taxon>
        <taxon>Muscomorpha</taxon>
        <taxon>Ephydroidea</taxon>
        <taxon>Drosophilidae</taxon>
        <taxon>Drosophila</taxon>
        <taxon>Sophophora</taxon>
    </lineage>
</organism>
<dbReference type="EC" id="1.13.11.54" evidence="1"/>
<dbReference type="EC" id="1.13.11.53" evidence="1"/>
<dbReference type="EMBL" id="AE014296">
    <property type="protein sequence ID" value="AAN11908.2"/>
    <property type="molecule type" value="Genomic_DNA"/>
</dbReference>
<dbReference type="EMBL" id="BT015218">
    <property type="protein sequence ID" value="AAT94447.1"/>
    <property type="status" value="ALT_INIT"/>
    <property type="molecule type" value="mRNA"/>
</dbReference>
<dbReference type="RefSeq" id="NP_001097577.1">
    <property type="nucleotide sequence ID" value="NM_001104107.2"/>
</dbReference>
<dbReference type="SMR" id="Q6AWN0"/>
<dbReference type="BioGRID" id="77443">
    <property type="interactions" value="14"/>
</dbReference>
<dbReference type="FunCoup" id="Q6AWN0">
    <property type="interactions" value="410"/>
</dbReference>
<dbReference type="IntAct" id="Q6AWN0">
    <property type="interactions" value="1"/>
</dbReference>
<dbReference type="STRING" id="7227.FBpp0112333"/>
<dbReference type="PaxDb" id="7227-FBpp0112333"/>
<dbReference type="EnsemblMetazoa" id="FBtr0113421">
    <property type="protein sequence ID" value="FBpp0112333"/>
    <property type="gene ID" value="FBgn0052068"/>
</dbReference>
<dbReference type="GeneID" id="326189"/>
<dbReference type="KEGG" id="dme:Dmel_CG32068"/>
<dbReference type="UCSC" id="CG32068-RB">
    <property type="organism name" value="d. melanogaster"/>
</dbReference>
<dbReference type="AGR" id="FB:FBgn0052068"/>
<dbReference type="CTD" id="55256"/>
<dbReference type="FlyBase" id="FBgn0052068">
    <property type="gene designation" value="Adi1"/>
</dbReference>
<dbReference type="VEuPathDB" id="VectorBase:FBgn0052068"/>
<dbReference type="eggNOG" id="KOG2107">
    <property type="taxonomic scope" value="Eukaryota"/>
</dbReference>
<dbReference type="GeneTree" id="ENSGT00390000008195"/>
<dbReference type="HOGENOM" id="CLU_090154_0_1_1"/>
<dbReference type="InParanoid" id="Q6AWN0"/>
<dbReference type="OMA" id="WYMDESQ"/>
<dbReference type="OrthoDB" id="1867259at2759"/>
<dbReference type="PhylomeDB" id="Q6AWN0"/>
<dbReference type="Reactome" id="R-DME-1237112">
    <property type="pathway name" value="Methionine salvage pathway"/>
</dbReference>
<dbReference type="UniPathway" id="UPA00904">
    <property type="reaction ID" value="UER00878"/>
</dbReference>
<dbReference type="BioGRID-ORCS" id="326189">
    <property type="hits" value="0 hits in 1 CRISPR screen"/>
</dbReference>
<dbReference type="GenomeRNAi" id="326189"/>
<dbReference type="PRO" id="PR:Q6AWN0"/>
<dbReference type="Proteomes" id="UP000000803">
    <property type="component" value="Chromosome 3L"/>
</dbReference>
<dbReference type="Bgee" id="FBgn0052068">
    <property type="expression patterns" value="Expressed in Malpighian tubule and 142 other cell types or tissues"/>
</dbReference>
<dbReference type="ExpressionAtlas" id="Q6AWN0">
    <property type="expression patterns" value="baseline and differential"/>
</dbReference>
<dbReference type="GO" id="GO:0005737">
    <property type="term" value="C:cytoplasm"/>
    <property type="evidence" value="ECO:0000250"/>
    <property type="project" value="UniProtKB"/>
</dbReference>
<dbReference type="GO" id="GO:0005634">
    <property type="term" value="C:nucleus"/>
    <property type="evidence" value="ECO:0000250"/>
    <property type="project" value="UniProtKB"/>
</dbReference>
<dbReference type="GO" id="GO:0005886">
    <property type="term" value="C:plasma membrane"/>
    <property type="evidence" value="ECO:0000250"/>
    <property type="project" value="UniProtKB"/>
</dbReference>
<dbReference type="GO" id="GO:0010308">
    <property type="term" value="F:acireductone dioxygenase (Ni2+-requiring) activity"/>
    <property type="evidence" value="ECO:0007669"/>
    <property type="project" value="UniProtKB-UniRule"/>
</dbReference>
<dbReference type="GO" id="GO:0010309">
    <property type="term" value="F:acireductone dioxygenase [iron(II)-requiring] activity"/>
    <property type="evidence" value="ECO:0000318"/>
    <property type="project" value="GO_Central"/>
</dbReference>
<dbReference type="GO" id="GO:0005506">
    <property type="term" value="F:iron ion binding"/>
    <property type="evidence" value="ECO:0007669"/>
    <property type="project" value="UniProtKB-UniRule"/>
</dbReference>
<dbReference type="GO" id="GO:0016151">
    <property type="term" value="F:nickel cation binding"/>
    <property type="evidence" value="ECO:0007669"/>
    <property type="project" value="UniProtKB-UniRule"/>
</dbReference>
<dbReference type="GO" id="GO:0016491">
    <property type="term" value="F:oxidoreductase activity"/>
    <property type="evidence" value="ECO:0000250"/>
    <property type="project" value="UniProtKB"/>
</dbReference>
<dbReference type="GO" id="GO:0019509">
    <property type="term" value="P:L-methionine salvage from methylthioadenosine"/>
    <property type="evidence" value="ECO:0000250"/>
    <property type="project" value="UniProtKB"/>
</dbReference>
<dbReference type="GO" id="GO:0009086">
    <property type="term" value="P:methionine biosynthetic process"/>
    <property type="evidence" value="ECO:0000315"/>
    <property type="project" value="CACAO"/>
</dbReference>
<dbReference type="GO" id="GO:0006555">
    <property type="term" value="P:methionine metabolic process"/>
    <property type="evidence" value="ECO:0000315"/>
    <property type="project" value="FlyBase"/>
</dbReference>
<dbReference type="GO" id="GO:2000243">
    <property type="term" value="P:positive regulation of reproductive process"/>
    <property type="evidence" value="ECO:0000315"/>
    <property type="project" value="CACAO"/>
</dbReference>
<dbReference type="CDD" id="cd02232">
    <property type="entry name" value="cupin_ARD"/>
    <property type="match status" value="1"/>
</dbReference>
<dbReference type="FunFam" id="2.60.120.10:FF:000031">
    <property type="entry name" value="1,2-dihydroxy-3-keto-5-methylthiopentene dioxygenase"/>
    <property type="match status" value="1"/>
</dbReference>
<dbReference type="Gene3D" id="2.60.120.10">
    <property type="entry name" value="Jelly Rolls"/>
    <property type="match status" value="1"/>
</dbReference>
<dbReference type="HAMAP" id="MF_03154">
    <property type="entry name" value="Salvage_MtnD_euk"/>
    <property type="match status" value="1"/>
</dbReference>
<dbReference type="InterPro" id="IPR004313">
    <property type="entry name" value="ARD"/>
</dbReference>
<dbReference type="InterPro" id="IPR027496">
    <property type="entry name" value="ARD_euk"/>
</dbReference>
<dbReference type="InterPro" id="IPR014710">
    <property type="entry name" value="RmlC-like_jellyroll"/>
</dbReference>
<dbReference type="InterPro" id="IPR011051">
    <property type="entry name" value="RmlC_Cupin_sf"/>
</dbReference>
<dbReference type="PANTHER" id="PTHR23418">
    <property type="entry name" value="ACIREDUCTONE DIOXYGENASE"/>
    <property type="match status" value="1"/>
</dbReference>
<dbReference type="PANTHER" id="PTHR23418:SF0">
    <property type="entry name" value="ACIREDUCTONE DIOXYGENASE"/>
    <property type="match status" value="1"/>
</dbReference>
<dbReference type="Pfam" id="PF03079">
    <property type="entry name" value="ARD"/>
    <property type="match status" value="1"/>
</dbReference>
<dbReference type="SUPFAM" id="SSF51182">
    <property type="entry name" value="RmlC-like cupins"/>
    <property type="match status" value="1"/>
</dbReference>
<reference key="1">
    <citation type="journal article" date="2000" name="Science">
        <title>The genome sequence of Drosophila melanogaster.</title>
        <authorList>
            <person name="Adams M.D."/>
            <person name="Celniker S.E."/>
            <person name="Holt R.A."/>
            <person name="Evans C.A."/>
            <person name="Gocayne J.D."/>
            <person name="Amanatides P.G."/>
            <person name="Scherer S.E."/>
            <person name="Li P.W."/>
            <person name="Hoskins R.A."/>
            <person name="Galle R.F."/>
            <person name="George R.A."/>
            <person name="Lewis S.E."/>
            <person name="Richards S."/>
            <person name="Ashburner M."/>
            <person name="Henderson S.N."/>
            <person name="Sutton G.G."/>
            <person name="Wortman J.R."/>
            <person name="Yandell M.D."/>
            <person name="Zhang Q."/>
            <person name="Chen L.X."/>
            <person name="Brandon R.C."/>
            <person name="Rogers Y.-H.C."/>
            <person name="Blazej R.G."/>
            <person name="Champe M."/>
            <person name="Pfeiffer B.D."/>
            <person name="Wan K.H."/>
            <person name="Doyle C."/>
            <person name="Baxter E.G."/>
            <person name="Helt G."/>
            <person name="Nelson C.R."/>
            <person name="Miklos G.L.G."/>
            <person name="Abril J.F."/>
            <person name="Agbayani A."/>
            <person name="An H.-J."/>
            <person name="Andrews-Pfannkoch C."/>
            <person name="Baldwin D."/>
            <person name="Ballew R.M."/>
            <person name="Basu A."/>
            <person name="Baxendale J."/>
            <person name="Bayraktaroglu L."/>
            <person name="Beasley E.M."/>
            <person name="Beeson K.Y."/>
            <person name="Benos P.V."/>
            <person name="Berman B.P."/>
            <person name="Bhandari D."/>
            <person name="Bolshakov S."/>
            <person name="Borkova D."/>
            <person name="Botchan M.R."/>
            <person name="Bouck J."/>
            <person name="Brokstein P."/>
            <person name="Brottier P."/>
            <person name="Burtis K.C."/>
            <person name="Busam D.A."/>
            <person name="Butler H."/>
            <person name="Cadieu E."/>
            <person name="Center A."/>
            <person name="Chandra I."/>
            <person name="Cherry J.M."/>
            <person name="Cawley S."/>
            <person name="Dahlke C."/>
            <person name="Davenport L.B."/>
            <person name="Davies P."/>
            <person name="de Pablos B."/>
            <person name="Delcher A."/>
            <person name="Deng Z."/>
            <person name="Mays A.D."/>
            <person name="Dew I."/>
            <person name="Dietz S.M."/>
            <person name="Dodson K."/>
            <person name="Doup L.E."/>
            <person name="Downes M."/>
            <person name="Dugan-Rocha S."/>
            <person name="Dunkov B.C."/>
            <person name="Dunn P."/>
            <person name="Durbin K.J."/>
            <person name="Evangelista C.C."/>
            <person name="Ferraz C."/>
            <person name="Ferriera S."/>
            <person name="Fleischmann W."/>
            <person name="Fosler C."/>
            <person name="Gabrielian A.E."/>
            <person name="Garg N.S."/>
            <person name="Gelbart W.M."/>
            <person name="Glasser K."/>
            <person name="Glodek A."/>
            <person name="Gong F."/>
            <person name="Gorrell J.H."/>
            <person name="Gu Z."/>
            <person name="Guan P."/>
            <person name="Harris M."/>
            <person name="Harris N.L."/>
            <person name="Harvey D.A."/>
            <person name="Heiman T.J."/>
            <person name="Hernandez J.R."/>
            <person name="Houck J."/>
            <person name="Hostin D."/>
            <person name="Houston K.A."/>
            <person name="Howland T.J."/>
            <person name="Wei M.-H."/>
            <person name="Ibegwam C."/>
            <person name="Jalali M."/>
            <person name="Kalush F."/>
            <person name="Karpen G.H."/>
            <person name="Ke Z."/>
            <person name="Kennison J.A."/>
            <person name="Ketchum K.A."/>
            <person name="Kimmel B.E."/>
            <person name="Kodira C.D."/>
            <person name="Kraft C.L."/>
            <person name="Kravitz S."/>
            <person name="Kulp D."/>
            <person name="Lai Z."/>
            <person name="Lasko P."/>
            <person name="Lei Y."/>
            <person name="Levitsky A.A."/>
            <person name="Li J.H."/>
            <person name="Li Z."/>
            <person name="Liang Y."/>
            <person name="Lin X."/>
            <person name="Liu X."/>
            <person name="Mattei B."/>
            <person name="McIntosh T.C."/>
            <person name="McLeod M.P."/>
            <person name="McPherson D."/>
            <person name="Merkulov G."/>
            <person name="Milshina N.V."/>
            <person name="Mobarry C."/>
            <person name="Morris J."/>
            <person name="Moshrefi A."/>
            <person name="Mount S.M."/>
            <person name="Moy M."/>
            <person name="Murphy B."/>
            <person name="Murphy L."/>
            <person name="Muzny D.M."/>
            <person name="Nelson D.L."/>
            <person name="Nelson D.R."/>
            <person name="Nelson K.A."/>
            <person name="Nixon K."/>
            <person name="Nusskern D.R."/>
            <person name="Pacleb J.M."/>
            <person name="Palazzolo M."/>
            <person name="Pittman G.S."/>
            <person name="Pan S."/>
            <person name="Pollard J."/>
            <person name="Puri V."/>
            <person name="Reese M.G."/>
            <person name="Reinert K."/>
            <person name="Remington K."/>
            <person name="Saunders R.D.C."/>
            <person name="Scheeler F."/>
            <person name="Shen H."/>
            <person name="Shue B.C."/>
            <person name="Siden-Kiamos I."/>
            <person name="Simpson M."/>
            <person name="Skupski M.P."/>
            <person name="Smith T.J."/>
            <person name="Spier E."/>
            <person name="Spradling A.C."/>
            <person name="Stapleton M."/>
            <person name="Strong R."/>
            <person name="Sun E."/>
            <person name="Svirskas R."/>
            <person name="Tector C."/>
            <person name="Turner R."/>
            <person name="Venter E."/>
            <person name="Wang A.H."/>
            <person name="Wang X."/>
            <person name="Wang Z.-Y."/>
            <person name="Wassarman D.A."/>
            <person name="Weinstock G.M."/>
            <person name="Weissenbach J."/>
            <person name="Williams S.M."/>
            <person name="Woodage T."/>
            <person name="Worley K.C."/>
            <person name="Wu D."/>
            <person name="Yang S."/>
            <person name="Yao Q.A."/>
            <person name="Ye J."/>
            <person name="Yeh R.-F."/>
            <person name="Zaveri J.S."/>
            <person name="Zhan M."/>
            <person name="Zhang G."/>
            <person name="Zhao Q."/>
            <person name="Zheng L."/>
            <person name="Zheng X.H."/>
            <person name="Zhong F.N."/>
            <person name="Zhong W."/>
            <person name="Zhou X."/>
            <person name="Zhu S.C."/>
            <person name="Zhu X."/>
            <person name="Smith H.O."/>
            <person name="Gibbs R.A."/>
            <person name="Myers E.W."/>
            <person name="Rubin G.M."/>
            <person name="Venter J.C."/>
        </authorList>
    </citation>
    <scope>NUCLEOTIDE SEQUENCE [LARGE SCALE GENOMIC DNA]</scope>
    <source>
        <strain>Berkeley</strain>
    </source>
</reference>
<reference key="2">
    <citation type="journal article" date="2002" name="Genome Biol.">
        <title>Annotation of the Drosophila melanogaster euchromatic genome: a systematic review.</title>
        <authorList>
            <person name="Misra S."/>
            <person name="Crosby M.A."/>
            <person name="Mungall C.J."/>
            <person name="Matthews B.B."/>
            <person name="Campbell K.S."/>
            <person name="Hradecky P."/>
            <person name="Huang Y."/>
            <person name="Kaminker J.S."/>
            <person name="Millburn G.H."/>
            <person name="Prochnik S.E."/>
            <person name="Smith C.D."/>
            <person name="Tupy J.L."/>
            <person name="Whitfield E.J."/>
            <person name="Bayraktaroglu L."/>
            <person name="Berman B.P."/>
            <person name="Bettencourt B.R."/>
            <person name="Celniker S.E."/>
            <person name="de Grey A.D.N.J."/>
            <person name="Drysdale R.A."/>
            <person name="Harris N.L."/>
            <person name="Richter J."/>
            <person name="Russo S."/>
            <person name="Schroeder A.J."/>
            <person name="Shu S.Q."/>
            <person name="Stapleton M."/>
            <person name="Yamada C."/>
            <person name="Ashburner M."/>
            <person name="Gelbart W.M."/>
            <person name="Rubin G.M."/>
            <person name="Lewis S.E."/>
        </authorList>
    </citation>
    <scope>GENOME REANNOTATION</scope>
    <source>
        <strain>Berkeley</strain>
    </source>
</reference>
<reference key="3">
    <citation type="submission" date="2004-08" db="EMBL/GenBank/DDBJ databases">
        <authorList>
            <person name="Stapleton M."/>
            <person name="Carlson J.W."/>
            <person name="Chavez C."/>
            <person name="Frise E."/>
            <person name="George R.A."/>
            <person name="Pacleb J.M."/>
            <person name="Park S."/>
            <person name="Wan K.H."/>
            <person name="Yu C."/>
            <person name="Rubin G.M."/>
            <person name="Celniker S.E."/>
        </authorList>
    </citation>
    <scope>NUCLEOTIDE SEQUENCE [LARGE SCALE MRNA]</scope>
    <source>
        <strain>Berkeley</strain>
        <tissue>Embryo</tissue>
    </source>
</reference>
<reference key="4">
    <citation type="journal article" date="2014" name="J. Biomed. Sci.">
        <title>ADI1, a methionine salvage pathway enzyme, is required for Drosophila fecundity.</title>
        <authorList>
            <person name="Chou H.Y."/>
            <person name="Lin Y.H."/>
            <person name="Shiu G.L."/>
            <person name="Tang H.Y."/>
            <person name="Cheng M.L."/>
            <person name="Shiao M.S."/>
            <person name="Pai L.M."/>
        </authorList>
    </citation>
    <scope>PATHWAY</scope>
    <scope>DEVELOPMENTAL STAGE</scope>
    <scope>DISRUPTION PHENOTYPE</scope>
</reference>
<name>MTND_DROME</name>
<accession>Q6AWN0</accession>
<accession>Q8IQE4</accession>
<proteinExistence type="evidence at transcript level"/>
<protein>
    <recommendedName>
        <fullName evidence="1">Acireductone dioxygenase</fullName>
    </recommendedName>
    <alternativeName>
        <fullName evidence="1">Acireductone dioxygenase (Fe(2+)-requiring)</fullName>
        <shortName evidence="1">ARD'</shortName>
        <shortName evidence="1">Fe-ARD</shortName>
        <ecNumber evidence="1">1.13.11.54</ecNumber>
    </alternativeName>
    <alternativeName>
        <fullName evidence="1">Acireductone dioxygenase (Ni(2+)-requiring)</fullName>
        <shortName evidence="1">ARD</shortName>
        <shortName evidence="1">Ni-ARD</shortName>
        <ecNumber evidence="1">1.13.11.53</ecNumber>
    </alternativeName>
</protein>
<evidence type="ECO:0000255" key="1">
    <source>
        <dbReference type="HAMAP-Rule" id="MF_03154"/>
    </source>
</evidence>
<evidence type="ECO:0000269" key="2">
    <source>
    </source>
</evidence>
<evidence type="ECO:0000303" key="3">
    <source>
    </source>
</evidence>
<evidence type="ECO:0000305" key="4"/>
<evidence type="ECO:0000312" key="5">
    <source>
        <dbReference type="FlyBase" id="FBgn0052068"/>
    </source>
</evidence>
<comment type="function">
    <text evidence="1">Catalyzes 2 different reactions between oxygen and the acireductone 1,2-dihydroxy-3-keto-5-methylthiopentene (DHK-MTPene) depending upon the metal bound in the active site. Fe-containing acireductone dioxygenase (Fe-ARD) produces formate and 2-keto-4-methylthiobutyrate (KMTB), the alpha-ketoacid precursor of methionine in the methionine recycle pathway. Ni-containing acireductone dioxygenase (Ni-ARD) produces methylthiopropionate, carbon monoxide and formate, and does not lie on the methionine recycle pathway.</text>
</comment>
<comment type="catalytic activity">
    <reaction evidence="1">
        <text>1,2-dihydroxy-5-(methylsulfanyl)pent-1-en-3-one + O2 = 4-methylsulfanyl-2-oxobutanoate + formate + 2 H(+)</text>
        <dbReference type="Rhea" id="RHEA:24504"/>
        <dbReference type="ChEBI" id="CHEBI:15378"/>
        <dbReference type="ChEBI" id="CHEBI:15379"/>
        <dbReference type="ChEBI" id="CHEBI:15740"/>
        <dbReference type="ChEBI" id="CHEBI:16723"/>
        <dbReference type="ChEBI" id="CHEBI:49252"/>
        <dbReference type="EC" id="1.13.11.54"/>
    </reaction>
</comment>
<comment type="catalytic activity">
    <reaction evidence="1">
        <text>1,2-dihydroxy-5-(methylsulfanyl)pent-1-en-3-one + O2 = 3-(methylsulfanyl)propanoate + CO + formate + 2 H(+)</text>
        <dbReference type="Rhea" id="RHEA:14161"/>
        <dbReference type="ChEBI" id="CHEBI:15378"/>
        <dbReference type="ChEBI" id="CHEBI:15379"/>
        <dbReference type="ChEBI" id="CHEBI:15740"/>
        <dbReference type="ChEBI" id="CHEBI:17245"/>
        <dbReference type="ChEBI" id="CHEBI:49016"/>
        <dbReference type="ChEBI" id="CHEBI:49252"/>
        <dbReference type="EC" id="1.13.11.53"/>
    </reaction>
</comment>
<comment type="cofactor">
    <cofactor evidence="1">
        <name>Fe(2+)</name>
        <dbReference type="ChEBI" id="CHEBI:29033"/>
    </cofactor>
    <cofactor evidence="1">
        <name>Ni(2+)</name>
        <dbReference type="ChEBI" id="CHEBI:49786"/>
    </cofactor>
    <text evidence="1">Binds either 1 Fe or Ni cation per monomer. Iron-binding promotes an acireductone dioxygenase reaction producing 2-keto-4-methylthiobutyrate, while nickel-binding promotes an acireductone dioxygenase reaction producing 3-(methylsulfanyl)propanoate.</text>
</comment>
<comment type="pathway">
    <text evidence="2">Amino-acid biosynthesis; L-methionine biosynthesis via salvage pathway; L-methionine from S-methyl-5-thio-alpha-D-ribose 1-phosphate: step 5/6.</text>
</comment>
<comment type="subcellular location">
    <subcellularLocation>
        <location evidence="1">Cytoplasm</location>
    </subcellularLocation>
    <subcellularLocation>
        <location evidence="1">Nucleus</location>
    </subcellularLocation>
</comment>
<comment type="developmental stage">
    <text evidence="2">Expressed at all developmental stages.</text>
</comment>
<comment type="disruption phenotype">
    <text evidence="2">Viable and fertile. Females display reduced fecundity under restricted dietary conditions of 10% yeast. Fecundity can be rescued by supplementing their diet with methionine.</text>
</comment>
<comment type="similarity">
    <text evidence="1">Belongs to the acireductone dioxygenase (ARD) family.</text>
</comment>
<comment type="sequence caution" evidence="4">
    <conflict type="erroneous initiation">
        <sequence resource="EMBL-CDS" id="AAT94447"/>
    </conflict>
    <text>Extended N-terminus.</text>
</comment>
<feature type="chain" id="PRO_0000223191" description="Acireductone dioxygenase">
    <location>
        <begin position="1"/>
        <end position="186"/>
    </location>
</feature>
<feature type="binding site" evidence="1">
    <location>
        <position position="89"/>
    </location>
    <ligand>
        <name>Fe(2+)</name>
        <dbReference type="ChEBI" id="CHEBI:29033"/>
        <note>for iron-dependent acireductone dioxygenase activity</note>
    </ligand>
</feature>
<feature type="binding site" evidence="1">
    <location>
        <position position="89"/>
    </location>
    <ligand>
        <name>Ni(2+)</name>
        <dbReference type="ChEBI" id="CHEBI:49786"/>
        <note>for nickel-dependent acireductone dioxygenase activity</note>
    </ligand>
</feature>
<feature type="binding site" evidence="1">
    <location>
        <position position="91"/>
    </location>
    <ligand>
        <name>Fe(2+)</name>
        <dbReference type="ChEBI" id="CHEBI:29033"/>
        <note>for iron-dependent acireductone dioxygenase activity</note>
    </ligand>
</feature>
<feature type="binding site" evidence="1">
    <location>
        <position position="91"/>
    </location>
    <ligand>
        <name>Ni(2+)</name>
        <dbReference type="ChEBI" id="CHEBI:49786"/>
        <note>for nickel-dependent acireductone dioxygenase activity</note>
    </ligand>
</feature>
<feature type="binding site" evidence="1">
    <location>
        <position position="95"/>
    </location>
    <ligand>
        <name>Fe(2+)</name>
        <dbReference type="ChEBI" id="CHEBI:29033"/>
        <note>for iron-dependent acireductone dioxygenase activity</note>
    </ligand>
</feature>
<feature type="binding site" evidence="1">
    <location>
        <position position="95"/>
    </location>
    <ligand>
        <name>Ni(2+)</name>
        <dbReference type="ChEBI" id="CHEBI:49786"/>
        <note>for nickel-dependent acireductone dioxygenase activity</note>
    </ligand>
</feature>
<feature type="binding site" evidence="1">
    <location>
        <position position="134"/>
    </location>
    <ligand>
        <name>Fe(2+)</name>
        <dbReference type="ChEBI" id="CHEBI:29033"/>
        <note>for iron-dependent acireductone dioxygenase activity</note>
    </ligand>
</feature>
<feature type="binding site" evidence="1">
    <location>
        <position position="134"/>
    </location>
    <ligand>
        <name>Ni(2+)</name>
        <dbReference type="ChEBI" id="CHEBI:49786"/>
        <note>for nickel-dependent acireductone dioxygenase activity</note>
    </ligand>
</feature>
<feature type="sequence conflict" description="In Ref. 3; AAT94447." evidence="4" ref="3">
    <original>K</original>
    <variation>N</variation>
    <location>
        <position position="185"/>
    </location>
</feature>